<feature type="chain" id="PRO_0000185224" description="UPF0128 protein aq_756">
    <location>
        <begin position="1"/>
        <end position="229"/>
    </location>
</feature>
<protein>
    <recommendedName>
        <fullName>UPF0128 protein aq_756</fullName>
    </recommendedName>
</protein>
<proteinExistence type="inferred from homology"/>
<reference key="1">
    <citation type="journal article" date="1998" name="Nature">
        <title>The complete genome of the hyperthermophilic bacterium Aquifex aeolicus.</title>
        <authorList>
            <person name="Deckert G."/>
            <person name="Warren P.V."/>
            <person name="Gaasterland T."/>
            <person name="Young W.G."/>
            <person name="Lenox A.L."/>
            <person name="Graham D.E."/>
            <person name="Overbeek R."/>
            <person name="Snead M.A."/>
            <person name="Keller M."/>
            <person name="Aujay M."/>
            <person name="Huber R."/>
            <person name="Feldman R.A."/>
            <person name="Short J.M."/>
            <person name="Olsen G.J."/>
            <person name="Swanson R.V."/>
        </authorList>
    </citation>
    <scope>NUCLEOTIDE SEQUENCE [LARGE SCALE GENOMIC DNA]</scope>
    <source>
        <strain>VF5</strain>
    </source>
</reference>
<comment type="similarity">
    <text evidence="1">Belongs to the UPF0128 family.</text>
</comment>
<sequence>MDKKELVEKIALNTLVFETLGQPEKEREFTIQDLRRWGFDLILGKKNGVRTFFASQAGREVGDKWEEGGATYEIEEILLELPENKKLFAHIETSEGVAYIVAELREGKENLEILRTPAPTLLMAFFKKHRLHELANNLKSVGVITEFYKQRGRESLPLPYKKLPLVARDFLERAKKVEKMAGFGRVALAYFGKTREKDNRFRVSWLLPTIALFDIDISEKANTALEEFK</sequence>
<keyword id="KW-1185">Reference proteome</keyword>
<dbReference type="EMBL" id="AE000657">
    <property type="protein sequence ID" value="AAC06928.1"/>
    <property type="molecule type" value="Genomic_DNA"/>
</dbReference>
<dbReference type="PIR" id="C70366">
    <property type="entry name" value="C70366"/>
</dbReference>
<dbReference type="RefSeq" id="NP_213519.1">
    <property type="nucleotide sequence ID" value="NC_000918.1"/>
</dbReference>
<dbReference type="RefSeq" id="WP_010880457.1">
    <property type="nucleotide sequence ID" value="NC_000918.1"/>
</dbReference>
<dbReference type="STRING" id="224324.aq_756"/>
<dbReference type="EnsemblBacteria" id="AAC06928">
    <property type="protein sequence ID" value="AAC06928"/>
    <property type="gene ID" value="aq_756"/>
</dbReference>
<dbReference type="KEGG" id="aae:aq_756"/>
<dbReference type="PATRIC" id="fig|224324.8.peg.602"/>
<dbReference type="eggNOG" id="COG1851">
    <property type="taxonomic scope" value="Bacteria"/>
</dbReference>
<dbReference type="HOGENOM" id="CLU_1243079_0_0_0"/>
<dbReference type="InParanoid" id="O66958"/>
<dbReference type="OrthoDB" id="1550396at2"/>
<dbReference type="Proteomes" id="UP000000798">
    <property type="component" value="Chromosome"/>
</dbReference>
<dbReference type="HAMAP" id="MF_00264">
    <property type="entry name" value="UPF0128"/>
    <property type="match status" value="1"/>
</dbReference>
<dbReference type="InterPro" id="IPR005266">
    <property type="entry name" value="UPF0128"/>
</dbReference>
<dbReference type="NCBIfam" id="TIGR00703">
    <property type="entry name" value="TIGR00703 family protein"/>
    <property type="match status" value="1"/>
</dbReference>
<dbReference type="Pfam" id="PF03673">
    <property type="entry name" value="UPF0128"/>
    <property type="match status" value="1"/>
</dbReference>
<dbReference type="PIRSF" id="PIRSF016179">
    <property type="entry name" value="UCP016179"/>
    <property type="match status" value="1"/>
</dbReference>
<gene>
    <name type="ordered locus">aq_756</name>
</gene>
<name>Y756_AQUAE</name>
<organism>
    <name type="scientific">Aquifex aeolicus (strain VF5)</name>
    <dbReference type="NCBI Taxonomy" id="224324"/>
    <lineage>
        <taxon>Bacteria</taxon>
        <taxon>Pseudomonadati</taxon>
        <taxon>Aquificota</taxon>
        <taxon>Aquificia</taxon>
        <taxon>Aquificales</taxon>
        <taxon>Aquificaceae</taxon>
        <taxon>Aquifex</taxon>
    </lineage>
</organism>
<accession>O66958</accession>
<evidence type="ECO:0000305" key="1"/>